<reference key="1">
    <citation type="journal article" date="2008" name="PLoS ONE">
        <title>Genome sequence of a lancefield group C Streptococcus zooepidemicus strain causing epidemic nephritis: new information about an old disease.</title>
        <authorList>
            <person name="Beres S.B."/>
            <person name="Sesso R."/>
            <person name="Pinto S.W.L."/>
            <person name="Hoe N.P."/>
            <person name="Porcella S.F."/>
            <person name="Deleo F.R."/>
            <person name="Musser J.M."/>
        </authorList>
    </citation>
    <scope>NUCLEOTIDE SEQUENCE [LARGE SCALE GENOMIC DNA]</scope>
    <source>
        <strain>MGCS10565</strain>
    </source>
</reference>
<gene>
    <name evidence="1" type="primary">rpmC</name>
    <name type="ordered locus">Sez_0064</name>
</gene>
<dbReference type="EMBL" id="CP001129">
    <property type="protein sequence ID" value="ACG61447.1"/>
    <property type="molecule type" value="Genomic_DNA"/>
</dbReference>
<dbReference type="RefSeq" id="WP_003046054.1">
    <property type="nucleotide sequence ID" value="NC_011134.1"/>
</dbReference>
<dbReference type="SMR" id="B4U508"/>
<dbReference type="GeneID" id="93825302"/>
<dbReference type="KEGG" id="sez:Sez_0064"/>
<dbReference type="HOGENOM" id="CLU_158491_5_2_9"/>
<dbReference type="Proteomes" id="UP000001873">
    <property type="component" value="Chromosome"/>
</dbReference>
<dbReference type="GO" id="GO:0022625">
    <property type="term" value="C:cytosolic large ribosomal subunit"/>
    <property type="evidence" value="ECO:0007669"/>
    <property type="project" value="TreeGrafter"/>
</dbReference>
<dbReference type="GO" id="GO:0003735">
    <property type="term" value="F:structural constituent of ribosome"/>
    <property type="evidence" value="ECO:0007669"/>
    <property type="project" value="InterPro"/>
</dbReference>
<dbReference type="GO" id="GO:0006412">
    <property type="term" value="P:translation"/>
    <property type="evidence" value="ECO:0007669"/>
    <property type="project" value="UniProtKB-UniRule"/>
</dbReference>
<dbReference type="CDD" id="cd00427">
    <property type="entry name" value="Ribosomal_L29_HIP"/>
    <property type="match status" value="1"/>
</dbReference>
<dbReference type="FunFam" id="1.10.287.310:FF:000001">
    <property type="entry name" value="50S ribosomal protein L29"/>
    <property type="match status" value="1"/>
</dbReference>
<dbReference type="Gene3D" id="1.10.287.310">
    <property type="match status" value="1"/>
</dbReference>
<dbReference type="HAMAP" id="MF_00374">
    <property type="entry name" value="Ribosomal_uL29"/>
    <property type="match status" value="1"/>
</dbReference>
<dbReference type="InterPro" id="IPR050063">
    <property type="entry name" value="Ribosomal_protein_uL29"/>
</dbReference>
<dbReference type="InterPro" id="IPR001854">
    <property type="entry name" value="Ribosomal_uL29"/>
</dbReference>
<dbReference type="InterPro" id="IPR018254">
    <property type="entry name" value="Ribosomal_uL29_CS"/>
</dbReference>
<dbReference type="InterPro" id="IPR036049">
    <property type="entry name" value="Ribosomal_uL29_sf"/>
</dbReference>
<dbReference type="NCBIfam" id="TIGR00012">
    <property type="entry name" value="L29"/>
    <property type="match status" value="1"/>
</dbReference>
<dbReference type="PANTHER" id="PTHR10916">
    <property type="entry name" value="60S RIBOSOMAL PROTEIN L35/50S RIBOSOMAL PROTEIN L29"/>
    <property type="match status" value="1"/>
</dbReference>
<dbReference type="PANTHER" id="PTHR10916:SF0">
    <property type="entry name" value="LARGE RIBOSOMAL SUBUNIT PROTEIN UL29C"/>
    <property type="match status" value="1"/>
</dbReference>
<dbReference type="Pfam" id="PF00831">
    <property type="entry name" value="Ribosomal_L29"/>
    <property type="match status" value="1"/>
</dbReference>
<dbReference type="SUPFAM" id="SSF46561">
    <property type="entry name" value="Ribosomal protein L29 (L29p)"/>
    <property type="match status" value="1"/>
</dbReference>
<dbReference type="PROSITE" id="PS00579">
    <property type="entry name" value="RIBOSOMAL_L29"/>
    <property type="match status" value="1"/>
</dbReference>
<accession>B4U508</accession>
<sequence>MKLEEIKKFVAELRGLSQEELAKKENELKKELFDLRFQAAAGQLDQTARLNEVKKQIARVKTVQSEMK</sequence>
<feature type="chain" id="PRO_1000121819" description="Large ribosomal subunit protein uL29">
    <location>
        <begin position="1"/>
        <end position="68"/>
    </location>
</feature>
<comment type="similarity">
    <text evidence="1">Belongs to the universal ribosomal protein uL29 family.</text>
</comment>
<name>RL29_STREM</name>
<proteinExistence type="inferred from homology"/>
<protein>
    <recommendedName>
        <fullName evidence="1">Large ribosomal subunit protein uL29</fullName>
    </recommendedName>
    <alternativeName>
        <fullName evidence="2">50S ribosomal protein L29</fullName>
    </alternativeName>
</protein>
<keyword id="KW-0687">Ribonucleoprotein</keyword>
<keyword id="KW-0689">Ribosomal protein</keyword>
<organism>
    <name type="scientific">Streptococcus equi subsp. zooepidemicus (strain MGCS10565)</name>
    <dbReference type="NCBI Taxonomy" id="552526"/>
    <lineage>
        <taxon>Bacteria</taxon>
        <taxon>Bacillati</taxon>
        <taxon>Bacillota</taxon>
        <taxon>Bacilli</taxon>
        <taxon>Lactobacillales</taxon>
        <taxon>Streptococcaceae</taxon>
        <taxon>Streptococcus</taxon>
    </lineage>
</organism>
<evidence type="ECO:0000255" key="1">
    <source>
        <dbReference type="HAMAP-Rule" id="MF_00374"/>
    </source>
</evidence>
<evidence type="ECO:0000305" key="2"/>